<keyword id="KW-0066">ATP synthesis</keyword>
<keyword id="KW-1003">Cell membrane</keyword>
<keyword id="KW-0139">CF(1)</keyword>
<keyword id="KW-0375">Hydrogen ion transport</keyword>
<keyword id="KW-0406">Ion transport</keyword>
<keyword id="KW-0472">Membrane</keyword>
<keyword id="KW-0813">Transport</keyword>
<feature type="chain" id="PRO_0000382124" description="ATP synthase subunit delta">
    <location>
        <begin position="1"/>
        <end position="181"/>
    </location>
</feature>
<accession>Q2ST37</accession>
<organism>
    <name type="scientific">Mycoplasma capricolum subsp. capricolum (strain California kid / ATCC 27343 / NCTC 10154)</name>
    <dbReference type="NCBI Taxonomy" id="340047"/>
    <lineage>
        <taxon>Bacteria</taxon>
        <taxon>Bacillati</taxon>
        <taxon>Mycoplasmatota</taxon>
        <taxon>Mollicutes</taxon>
        <taxon>Mycoplasmataceae</taxon>
        <taxon>Mycoplasma</taxon>
    </lineage>
</organism>
<comment type="function">
    <text evidence="1">F(1)F(0) ATP synthase produces ATP from ADP in the presence of a proton or sodium gradient. F-type ATPases consist of two structural domains, F(1) containing the extramembraneous catalytic core and F(0) containing the membrane proton channel, linked together by a central stalk and a peripheral stalk. During catalysis, ATP synthesis in the catalytic domain of F(1) is coupled via a rotary mechanism of the central stalk subunits to proton translocation.</text>
</comment>
<comment type="function">
    <text evidence="1">This protein is part of the stalk that links CF(0) to CF(1). It either transmits conformational changes from CF(0) to CF(1) or is implicated in proton conduction.</text>
</comment>
<comment type="subunit">
    <text evidence="1">F-type ATPases have 2 components, F(1) - the catalytic core - and F(0) - the membrane proton channel. F(1) has five subunits: alpha(3), beta(3), gamma(1), delta(1), epsilon(1). F(0) has three main subunits: a(1), b(2) and c(10-14). The alpha and beta chains form an alternating ring which encloses part of the gamma chain. F(1) is attached to F(0) by a central stalk formed by the gamma and epsilon chains, while a peripheral stalk is formed by the delta and b chains.</text>
</comment>
<comment type="subcellular location">
    <subcellularLocation>
        <location evidence="1">Cell membrane</location>
        <topology evidence="1">Peripheral membrane protein</topology>
    </subcellularLocation>
</comment>
<comment type="similarity">
    <text evidence="1">Belongs to the ATPase delta chain family.</text>
</comment>
<evidence type="ECO:0000255" key="1">
    <source>
        <dbReference type="HAMAP-Rule" id="MF_01416"/>
    </source>
</evidence>
<protein>
    <recommendedName>
        <fullName evidence="1">ATP synthase subunit delta</fullName>
    </recommendedName>
    <alternativeName>
        <fullName evidence="1">ATP synthase F(1) sector subunit delta</fullName>
    </alternativeName>
    <alternativeName>
        <fullName evidence="1">F-type ATPase subunit delta</fullName>
        <shortName evidence="1">F-ATPase subunit delta</shortName>
    </alternativeName>
</protein>
<sequence>MILKDSTINNYATALFNIAVKEKLVDDYIIQVDALIQSLSDKDDFNKLVSFSNKQEKQDAILIIEKTFAPFEFDIYLINALKILVENQLFINTRMILKALYKKLLDYKNIVLGVVYSTEKLTKTQLSAIKKKISNKVNKKVELVNKIDPTLIGGIKVNVQGKVFDGSIKAKLEALKKQMNT</sequence>
<proteinExistence type="inferred from homology"/>
<dbReference type="EMBL" id="CP000123">
    <property type="protein sequence ID" value="ABC01307.1"/>
    <property type="molecule type" value="Genomic_DNA"/>
</dbReference>
<dbReference type="RefSeq" id="WP_011386981.1">
    <property type="nucleotide sequence ID" value="NC_007633.1"/>
</dbReference>
<dbReference type="SMR" id="Q2ST37"/>
<dbReference type="GeneID" id="23778964"/>
<dbReference type="KEGG" id="mcp:MCAP_0081"/>
<dbReference type="HOGENOM" id="CLU_085114_4_2_14"/>
<dbReference type="PhylomeDB" id="Q2ST37"/>
<dbReference type="Proteomes" id="UP000001928">
    <property type="component" value="Chromosome"/>
</dbReference>
<dbReference type="GO" id="GO:0005886">
    <property type="term" value="C:plasma membrane"/>
    <property type="evidence" value="ECO:0007669"/>
    <property type="project" value="UniProtKB-SubCell"/>
</dbReference>
<dbReference type="GO" id="GO:0045259">
    <property type="term" value="C:proton-transporting ATP synthase complex"/>
    <property type="evidence" value="ECO:0007669"/>
    <property type="project" value="UniProtKB-KW"/>
</dbReference>
<dbReference type="GO" id="GO:0046933">
    <property type="term" value="F:proton-transporting ATP synthase activity, rotational mechanism"/>
    <property type="evidence" value="ECO:0007669"/>
    <property type="project" value="UniProtKB-UniRule"/>
</dbReference>
<dbReference type="Gene3D" id="1.10.520.20">
    <property type="entry name" value="N-terminal domain of the delta subunit of the F1F0-ATP synthase"/>
    <property type="match status" value="1"/>
</dbReference>
<dbReference type="HAMAP" id="MF_01416">
    <property type="entry name" value="ATP_synth_delta_bact"/>
    <property type="match status" value="1"/>
</dbReference>
<dbReference type="InterPro" id="IPR026015">
    <property type="entry name" value="ATP_synth_OSCP/delta_N_sf"/>
</dbReference>
<dbReference type="InterPro" id="IPR000711">
    <property type="entry name" value="ATPase_OSCP/dsu"/>
</dbReference>
<dbReference type="NCBIfam" id="TIGR01145">
    <property type="entry name" value="ATP_synt_delta"/>
    <property type="match status" value="1"/>
</dbReference>
<dbReference type="NCBIfam" id="NF009975">
    <property type="entry name" value="PRK13436.1"/>
    <property type="match status" value="1"/>
</dbReference>
<dbReference type="PANTHER" id="PTHR11910">
    <property type="entry name" value="ATP SYNTHASE DELTA CHAIN"/>
    <property type="match status" value="1"/>
</dbReference>
<dbReference type="Pfam" id="PF00213">
    <property type="entry name" value="OSCP"/>
    <property type="match status" value="1"/>
</dbReference>
<dbReference type="PRINTS" id="PR00125">
    <property type="entry name" value="ATPASEDELTA"/>
</dbReference>
<dbReference type="SUPFAM" id="SSF47928">
    <property type="entry name" value="N-terminal domain of the delta subunit of the F1F0-ATP synthase"/>
    <property type="match status" value="1"/>
</dbReference>
<reference key="1">
    <citation type="submission" date="2005-09" db="EMBL/GenBank/DDBJ databases">
        <authorList>
            <person name="Glass J.I."/>
            <person name="Lartigue C."/>
            <person name="Pfannkoch C."/>
            <person name="Baden-Tillson H."/>
            <person name="Smith H.O."/>
            <person name="Venter J.C."/>
            <person name="Roske K."/>
            <person name="Wise K.S."/>
            <person name="Calcutt M.J."/>
            <person name="Nelson W.C."/>
            <person name="Nierman W.C."/>
        </authorList>
    </citation>
    <scope>NUCLEOTIDE SEQUENCE [LARGE SCALE GENOMIC DNA]</scope>
    <source>
        <strain>California kid / ATCC 27343 / NCTC 10154</strain>
    </source>
</reference>
<name>ATPD_MYCCT</name>
<gene>
    <name evidence="1" type="primary">atpH</name>
    <name type="ordered locus">MCAP_0081</name>
</gene>